<dbReference type="EC" id="6.5.1.2" evidence="1"/>
<dbReference type="EMBL" id="CT573326">
    <property type="protein sequence ID" value="CAK14613.1"/>
    <property type="molecule type" value="Genomic_DNA"/>
</dbReference>
<dbReference type="RefSeq" id="WP_011533022.1">
    <property type="nucleotide sequence ID" value="NC_008027.1"/>
</dbReference>
<dbReference type="SMR" id="Q1ICK0"/>
<dbReference type="STRING" id="384676.PSEEN1769"/>
<dbReference type="GeneID" id="32805005"/>
<dbReference type="KEGG" id="pen:PSEEN1769"/>
<dbReference type="eggNOG" id="COG0272">
    <property type="taxonomic scope" value="Bacteria"/>
</dbReference>
<dbReference type="HOGENOM" id="CLU_007764_2_1_6"/>
<dbReference type="OrthoDB" id="9759736at2"/>
<dbReference type="Proteomes" id="UP000000658">
    <property type="component" value="Chromosome"/>
</dbReference>
<dbReference type="GO" id="GO:0005829">
    <property type="term" value="C:cytosol"/>
    <property type="evidence" value="ECO:0007669"/>
    <property type="project" value="TreeGrafter"/>
</dbReference>
<dbReference type="GO" id="GO:0003677">
    <property type="term" value="F:DNA binding"/>
    <property type="evidence" value="ECO:0007669"/>
    <property type="project" value="InterPro"/>
</dbReference>
<dbReference type="GO" id="GO:0003911">
    <property type="term" value="F:DNA ligase (NAD+) activity"/>
    <property type="evidence" value="ECO:0007669"/>
    <property type="project" value="UniProtKB-UniRule"/>
</dbReference>
<dbReference type="GO" id="GO:0046872">
    <property type="term" value="F:metal ion binding"/>
    <property type="evidence" value="ECO:0007669"/>
    <property type="project" value="UniProtKB-KW"/>
</dbReference>
<dbReference type="GO" id="GO:0006281">
    <property type="term" value="P:DNA repair"/>
    <property type="evidence" value="ECO:0007669"/>
    <property type="project" value="UniProtKB-KW"/>
</dbReference>
<dbReference type="GO" id="GO:0006260">
    <property type="term" value="P:DNA replication"/>
    <property type="evidence" value="ECO:0007669"/>
    <property type="project" value="UniProtKB-KW"/>
</dbReference>
<dbReference type="CDD" id="cd17748">
    <property type="entry name" value="BRCT_DNA_ligase_like"/>
    <property type="match status" value="1"/>
</dbReference>
<dbReference type="CDD" id="cd00114">
    <property type="entry name" value="LIGANc"/>
    <property type="match status" value="1"/>
</dbReference>
<dbReference type="FunFam" id="1.10.150.20:FF:000006">
    <property type="entry name" value="DNA ligase"/>
    <property type="match status" value="1"/>
</dbReference>
<dbReference type="FunFam" id="1.10.150.20:FF:000007">
    <property type="entry name" value="DNA ligase"/>
    <property type="match status" value="1"/>
</dbReference>
<dbReference type="FunFam" id="1.10.287.610:FF:000002">
    <property type="entry name" value="DNA ligase"/>
    <property type="match status" value="1"/>
</dbReference>
<dbReference type="FunFam" id="2.40.50.140:FF:000012">
    <property type="entry name" value="DNA ligase"/>
    <property type="match status" value="1"/>
</dbReference>
<dbReference type="FunFam" id="3.30.470.30:FF:000001">
    <property type="entry name" value="DNA ligase"/>
    <property type="match status" value="1"/>
</dbReference>
<dbReference type="Gene3D" id="6.20.10.30">
    <property type="match status" value="1"/>
</dbReference>
<dbReference type="Gene3D" id="1.10.150.20">
    <property type="entry name" value="5' to 3' exonuclease, C-terminal subdomain"/>
    <property type="match status" value="3"/>
</dbReference>
<dbReference type="Gene3D" id="3.40.50.10190">
    <property type="entry name" value="BRCT domain"/>
    <property type="match status" value="1"/>
</dbReference>
<dbReference type="Gene3D" id="3.30.470.30">
    <property type="entry name" value="DNA ligase/mRNA capping enzyme"/>
    <property type="match status" value="1"/>
</dbReference>
<dbReference type="Gene3D" id="1.10.287.610">
    <property type="entry name" value="Helix hairpin bin"/>
    <property type="match status" value="1"/>
</dbReference>
<dbReference type="Gene3D" id="2.40.50.140">
    <property type="entry name" value="Nucleic acid-binding proteins"/>
    <property type="match status" value="1"/>
</dbReference>
<dbReference type="HAMAP" id="MF_01588">
    <property type="entry name" value="DNA_ligase_A"/>
    <property type="match status" value="1"/>
</dbReference>
<dbReference type="InterPro" id="IPR001357">
    <property type="entry name" value="BRCT_dom"/>
</dbReference>
<dbReference type="InterPro" id="IPR036420">
    <property type="entry name" value="BRCT_dom_sf"/>
</dbReference>
<dbReference type="InterPro" id="IPR041663">
    <property type="entry name" value="DisA/LigA_HHH"/>
</dbReference>
<dbReference type="InterPro" id="IPR001679">
    <property type="entry name" value="DNA_ligase"/>
</dbReference>
<dbReference type="InterPro" id="IPR018239">
    <property type="entry name" value="DNA_ligase_AS"/>
</dbReference>
<dbReference type="InterPro" id="IPR033136">
    <property type="entry name" value="DNA_ligase_CS"/>
</dbReference>
<dbReference type="InterPro" id="IPR013839">
    <property type="entry name" value="DNAligase_adenylation"/>
</dbReference>
<dbReference type="InterPro" id="IPR013840">
    <property type="entry name" value="DNAligase_N"/>
</dbReference>
<dbReference type="InterPro" id="IPR003583">
    <property type="entry name" value="Hlx-hairpin-Hlx_DNA-bd_motif"/>
</dbReference>
<dbReference type="InterPro" id="IPR012340">
    <property type="entry name" value="NA-bd_OB-fold"/>
</dbReference>
<dbReference type="InterPro" id="IPR004150">
    <property type="entry name" value="NAD_DNA_ligase_OB"/>
</dbReference>
<dbReference type="InterPro" id="IPR010994">
    <property type="entry name" value="RuvA_2-like"/>
</dbReference>
<dbReference type="InterPro" id="IPR004149">
    <property type="entry name" value="Znf_DNAligase_C4"/>
</dbReference>
<dbReference type="NCBIfam" id="TIGR00575">
    <property type="entry name" value="dnlj"/>
    <property type="match status" value="1"/>
</dbReference>
<dbReference type="NCBIfam" id="NF005932">
    <property type="entry name" value="PRK07956.1"/>
    <property type="match status" value="1"/>
</dbReference>
<dbReference type="PANTHER" id="PTHR23389">
    <property type="entry name" value="CHROMOSOME TRANSMISSION FIDELITY FACTOR 18"/>
    <property type="match status" value="1"/>
</dbReference>
<dbReference type="PANTHER" id="PTHR23389:SF9">
    <property type="entry name" value="DNA LIGASE"/>
    <property type="match status" value="1"/>
</dbReference>
<dbReference type="Pfam" id="PF00533">
    <property type="entry name" value="BRCT"/>
    <property type="match status" value="1"/>
</dbReference>
<dbReference type="Pfam" id="PF01653">
    <property type="entry name" value="DNA_ligase_aden"/>
    <property type="match status" value="1"/>
</dbReference>
<dbReference type="Pfam" id="PF03120">
    <property type="entry name" value="DNA_ligase_OB"/>
    <property type="match status" value="1"/>
</dbReference>
<dbReference type="Pfam" id="PF03119">
    <property type="entry name" value="DNA_ligase_ZBD"/>
    <property type="match status" value="1"/>
</dbReference>
<dbReference type="Pfam" id="PF12826">
    <property type="entry name" value="HHH_2"/>
    <property type="match status" value="1"/>
</dbReference>
<dbReference type="Pfam" id="PF22745">
    <property type="entry name" value="Nlig-Ia"/>
    <property type="match status" value="1"/>
</dbReference>
<dbReference type="PIRSF" id="PIRSF001604">
    <property type="entry name" value="LigA"/>
    <property type="match status" value="1"/>
</dbReference>
<dbReference type="SMART" id="SM00292">
    <property type="entry name" value="BRCT"/>
    <property type="match status" value="1"/>
</dbReference>
<dbReference type="SMART" id="SM00278">
    <property type="entry name" value="HhH1"/>
    <property type="match status" value="3"/>
</dbReference>
<dbReference type="SMART" id="SM00532">
    <property type="entry name" value="LIGANc"/>
    <property type="match status" value="1"/>
</dbReference>
<dbReference type="SUPFAM" id="SSF52113">
    <property type="entry name" value="BRCT domain"/>
    <property type="match status" value="1"/>
</dbReference>
<dbReference type="SUPFAM" id="SSF56091">
    <property type="entry name" value="DNA ligase/mRNA capping enzyme, catalytic domain"/>
    <property type="match status" value="1"/>
</dbReference>
<dbReference type="SUPFAM" id="SSF50249">
    <property type="entry name" value="Nucleic acid-binding proteins"/>
    <property type="match status" value="1"/>
</dbReference>
<dbReference type="SUPFAM" id="SSF47781">
    <property type="entry name" value="RuvA domain 2-like"/>
    <property type="match status" value="2"/>
</dbReference>
<dbReference type="PROSITE" id="PS50172">
    <property type="entry name" value="BRCT"/>
    <property type="match status" value="1"/>
</dbReference>
<dbReference type="PROSITE" id="PS01055">
    <property type="entry name" value="DNA_LIGASE_N1"/>
    <property type="match status" value="1"/>
</dbReference>
<dbReference type="PROSITE" id="PS01056">
    <property type="entry name" value="DNA_LIGASE_N2"/>
    <property type="match status" value="1"/>
</dbReference>
<organism>
    <name type="scientific">Pseudomonas entomophila (strain L48)</name>
    <dbReference type="NCBI Taxonomy" id="384676"/>
    <lineage>
        <taxon>Bacteria</taxon>
        <taxon>Pseudomonadati</taxon>
        <taxon>Pseudomonadota</taxon>
        <taxon>Gammaproteobacteria</taxon>
        <taxon>Pseudomonadales</taxon>
        <taxon>Pseudomonadaceae</taxon>
        <taxon>Pseudomonas</taxon>
    </lineage>
</organism>
<feature type="chain" id="PRO_0000313375" description="DNA ligase">
    <location>
        <begin position="1"/>
        <end position="784"/>
    </location>
</feature>
<feature type="domain" description="BRCT" evidence="1">
    <location>
        <begin position="701"/>
        <end position="784"/>
    </location>
</feature>
<feature type="active site" description="N6-AMP-lysine intermediate" evidence="1">
    <location>
        <position position="122"/>
    </location>
</feature>
<feature type="binding site" evidence="1">
    <location>
        <begin position="31"/>
        <end position="35"/>
    </location>
    <ligand>
        <name>NAD(+)</name>
        <dbReference type="ChEBI" id="CHEBI:57540"/>
    </ligand>
</feature>
<feature type="binding site" evidence="1">
    <location>
        <begin position="80"/>
        <end position="81"/>
    </location>
    <ligand>
        <name>NAD(+)</name>
        <dbReference type="ChEBI" id="CHEBI:57540"/>
    </ligand>
</feature>
<feature type="binding site" evidence="1">
    <location>
        <position position="120"/>
    </location>
    <ligand>
        <name>NAD(+)</name>
        <dbReference type="ChEBI" id="CHEBI:57540"/>
    </ligand>
</feature>
<feature type="binding site" evidence="1">
    <location>
        <position position="143"/>
    </location>
    <ligand>
        <name>NAD(+)</name>
        <dbReference type="ChEBI" id="CHEBI:57540"/>
    </ligand>
</feature>
<feature type="binding site" evidence="1">
    <location>
        <position position="180"/>
    </location>
    <ligand>
        <name>NAD(+)</name>
        <dbReference type="ChEBI" id="CHEBI:57540"/>
    </ligand>
</feature>
<feature type="binding site" evidence="1">
    <location>
        <position position="296"/>
    </location>
    <ligand>
        <name>NAD(+)</name>
        <dbReference type="ChEBI" id="CHEBI:57540"/>
    </ligand>
</feature>
<feature type="binding site" evidence="1">
    <location>
        <position position="320"/>
    </location>
    <ligand>
        <name>NAD(+)</name>
        <dbReference type="ChEBI" id="CHEBI:57540"/>
    </ligand>
</feature>
<feature type="binding site" evidence="1">
    <location>
        <position position="414"/>
    </location>
    <ligand>
        <name>Zn(2+)</name>
        <dbReference type="ChEBI" id="CHEBI:29105"/>
    </ligand>
</feature>
<feature type="binding site" evidence="1">
    <location>
        <position position="417"/>
    </location>
    <ligand>
        <name>Zn(2+)</name>
        <dbReference type="ChEBI" id="CHEBI:29105"/>
    </ligand>
</feature>
<feature type="binding site" evidence="1">
    <location>
        <position position="444"/>
    </location>
    <ligand>
        <name>Zn(2+)</name>
        <dbReference type="ChEBI" id="CHEBI:29105"/>
    </ligand>
</feature>
<feature type="binding site" evidence="1">
    <location>
        <position position="450"/>
    </location>
    <ligand>
        <name>Zn(2+)</name>
        <dbReference type="ChEBI" id="CHEBI:29105"/>
    </ligand>
</feature>
<keyword id="KW-0227">DNA damage</keyword>
<keyword id="KW-0234">DNA repair</keyword>
<keyword id="KW-0235">DNA replication</keyword>
<keyword id="KW-0436">Ligase</keyword>
<keyword id="KW-0460">Magnesium</keyword>
<keyword id="KW-0464">Manganese</keyword>
<keyword id="KW-0479">Metal-binding</keyword>
<keyword id="KW-0520">NAD</keyword>
<keyword id="KW-0862">Zinc</keyword>
<proteinExistence type="inferred from homology"/>
<name>DNLJ_PSEE4</name>
<sequence length="784" mass="85515">MNAESRIHALRAELDQHNYRYYVLDEPSVPDAEYDRLFNELKALEAEHPQLVTADSPTQRVGGAALAAFSQVRHEVPMLSLGNAFEEDDLRDFDRRVVEGLDLPGGDLFAAQAAVDYSCEPKLDGLAVSLLYRDGQLVQGATRGDGTTGEDISTNVRTVRNIPLKLQGEGWPAVLEVRGEVYMSKAGFDRLNAAQAEAGGKTFANPRNAAAGSLRQLDSKITASRPLEFCCYGVGQVSEPFGDSHIGILEKLKTWGLPISRELRHAAGIEECLAYYRDIGARRNDLPYEIDGVVFKVNSLASQRELGFRAREPRWAIAHKFPAMEELTEVLDVEFQVGRTGAVTPVARLKPVKVAGVMVSNATLHNMDEIARLGLRIGDTVIIRRAGDVIPQVMQVVLDRRPENARPVEVPTECPVCGSQVERTQLVKRSKGKETISEGAVYRCVGRLSCAAQLKQAIIHYVSRRAMDIDGLGEKSVEQLVDEGLIRSPADLYKLEFEQVVVLEGFAEVSSRKLLEAIEASKRPSLARFIYALGIPDVGEETAKVLARSLGSLARVQVALPQVLTYLPDIGLEVAHEIHNFFEDTHNREVIAQLLASGMQLQEEGELGAEFAASTTLAGMLAKLDIPSVGPTGAEKLVDKLGTLDKIIAADGIDLRQALNTKQAEGVREFFRDEANQLLARAIEAQLLDFGMHWSCEKRSAEGLPLAGQTWVLTGTLERMSRDVAKEQLERLGAKVAGSVSGKTHCVVAGPGAGSKLAKANELGVKVLDEEQFVAFMAEQGITL</sequence>
<evidence type="ECO:0000255" key="1">
    <source>
        <dbReference type="HAMAP-Rule" id="MF_01588"/>
    </source>
</evidence>
<comment type="function">
    <text evidence="1">DNA ligase that catalyzes the formation of phosphodiester linkages between 5'-phosphoryl and 3'-hydroxyl groups in double-stranded DNA using NAD as a coenzyme and as the energy source for the reaction. It is essential for DNA replication and repair of damaged DNA.</text>
</comment>
<comment type="catalytic activity">
    <reaction evidence="1">
        <text>NAD(+) + (deoxyribonucleotide)n-3'-hydroxyl + 5'-phospho-(deoxyribonucleotide)m = (deoxyribonucleotide)n+m + AMP + beta-nicotinamide D-nucleotide.</text>
        <dbReference type="EC" id="6.5.1.2"/>
    </reaction>
</comment>
<comment type="cofactor">
    <cofactor evidence="1">
        <name>Mg(2+)</name>
        <dbReference type="ChEBI" id="CHEBI:18420"/>
    </cofactor>
    <cofactor evidence="1">
        <name>Mn(2+)</name>
        <dbReference type="ChEBI" id="CHEBI:29035"/>
    </cofactor>
</comment>
<comment type="similarity">
    <text evidence="1">Belongs to the NAD-dependent DNA ligase family. LigA subfamily.</text>
</comment>
<reference key="1">
    <citation type="journal article" date="2006" name="Nat. Biotechnol.">
        <title>Complete genome sequence of the entomopathogenic and metabolically versatile soil bacterium Pseudomonas entomophila.</title>
        <authorList>
            <person name="Vodovar N."/>
            <person name="Vallenet D."/>
            <person name="Cruveiller S."/>
            <person name="Rouy Z."/>
            <person name="Barbe V."/>
            <person name="Acosta C."/>
            <person name="Cattolico L."/>
            <person name="Jubin C."/>
            <person name="Lajus A."/>
            <person name="Segurens B."/>
            <person name="Vacherie B."/>
            <person name="Wincker P."/>
            <person name="Weissenbach J."/>
            <person name="Lemaitre B."/>
            <person name="Medigue C."/>
            <person name="Boccard F."/>
        </authorList>
    </citation>
    <scope>NUCLEOTIDE SEQUENCE [LARGE SCALE GENOMIC DNA]</scope>
    <source>
        <strain>L48</strain>
    </source>
</reference>
<protein>
    <recommendedName>
        <fullName evidence="1">DNA ligase</fullName>
        <ecNumber evidence="1">6.5.1.2</ecNumber>
    </recommendedName>
    <alternativeName>
        <fullName evidence="1">Polydeoxyribonucleotide synthase [NAD(+)]</fullName>
    </alternativeName>
</protein>
<gene>
    <name evidence="1" type="primary">ligA</name>
    <name type="ordered locus">PSEEN1769</name>
</gene>
<accession>Q1ICK0</accession>